<name>EDN1_BOVIN</name>
<comment type="function">
    <text evidence="1 2 3">Endothelins are endothelium-derived vasoconstrictor peptides (By similarity). Probable ligand for G-protein coupled receptors EDNRA and EDNRB which activates PTK2B, BCAR1, BCAR3 and, GTPases RAP1 and RHOA cascade in glomerular mesangial cells (By similarity). Also binds the DEAR/FBXW7-AS1 receptor (By similarity). Promotes mesenteric arterial wall remodeling via activation of ROCK signaling and subsequent colocalization of NFATC3 with F-actin filaments (By similarity). NFATC3 then translocates to the nucleus where it subsequently promotes the transcription of the smooth muscle hypertrophy and differentiation marker ACTA2 (By similarity).</text>
</comment>
<comment type="subcellular location">
    <subcellularLocation>
        <location>Secreted</location>
    </subcellularLocation>
</comment>
<comment type="similarity">
    <text evidence="6">Belongs to the endothelin/sarafotoxin family.</text>
</comment>
<dbReference type="EMBL" id="X52740">
    <property type="protein sequence ID" value="CAA36954.1"/>
    <property type="molecule type" value="mRNA"/>
</dbReference>
<dbReference type="EMBL" id="X52942">
    <property type="protein sequence ID" value="CAA37117.1"/>
    <property type="molecule type" value="mRNA"/>
</dbReference>
<dbReference type="EMBL" id="S37093">
    <property type="protein sequence ID" value="AAB22241.1"/>
    <property type="molecule type" value="mRNA"/>
</dbReference>
<dbReference type="EMBL" id="BC102459">
    <property type="protein sequence ID" value="AAI02460.1"/>
    <property type="molecule type" value="mRNA"/>
</dbReference>
<dbReference type="PIR" id="S10488">
    <property type="entry name" value="S10488"/>
</dbReference>
<dbReference type="RefSeq" id="NP_851353.1">
    <property type="nucleotide sequence ID" value="NM_181010.2"/>
</dbReference>
<dbReference type="BMRB" id="P17322"/>
<dbReference type="FunCoup" id="P17322">
    <property type="interactions" value="120"/>
</dbReference>
<dbReference type="STRING" id="9913.ENSBTAP00000010649"/>
<dbReference type="PaxDb" id="9913-ENSBTAP00000010649"/>
<dbReference type="Ensembl" id="ENSBTAT00000010649.6">
    <property type="protein sequence ID" value="ENSBTAP00000010649.4"/>
    <property type="gene ID" value="ENSBTAG00000008096.6"/>
</dbReference>
<dbReference type="GeneID" id="281137"/>
<dbReference type="KEGG" id="bta:281137"/>
<dbReference type="CTD" id="1906"/>
<dbReference type="VEuPathDB" id="HostDB:ENSBTAG00000008096"/>
<dbReference type="VGNC" id="VGNC:28327">
    <property type="gene designation" value="EDN1"/>
</dbReference>
<dbReference type="eggNOG" id="ENOG502S1NV">
    <property type="taxonomic scope" value="Eukaryota"/>
</dbReference>
<dbReference type="GeneTree" id="ENSGT00950000183053"/>
<dbReference type="HOGENOM" id="CLU_090013_1_0_1"/>
<dbReference type="InParanoid" id="P17322"/>
<dbReference type="OMA" id="TDHRNRC"/>
<dbReference type="OrthoDB" id="8873756at2759"/>
<dbReference type="TreeFam" id="TF333184"/>
<dbReference type="Reactome" id="R-BTA-375276">
    <property type="pathway name" value="Peptide ligand-binding receptors"/>
</dbReference>
<dbReference type="Reactome" id="R-BTA-416476">
    <property type="pathway name" value="G alpha (q) signalling events"/>
</dbReference>
<dbReference type="Proteomes" id="UP000009136">
    <property type="component" value="Chromosome 23"/>
</dbReference>
<dbReference type="Bgee" id="ENSBTAG00000008096">
    <property type="expression patterns" value="Expressed in ureter and 95 other cell types or tissues"/>
</dbReference>
<dbReference type="GO" id="GO:0005737">
    <property type="term" value="C:cytoplasm"/>
    <property type="evidence" value="ECO:0007669"/>
    <property type="project" value="Ensembl"/>
</dbReference>
<dbReference type="GO" id="GO:0005615">
    <property type="term" value="C:extracellular space"/>
    <property type="evidence" value="ECO:0000318"/>
    <property type="project" value="GO_Central"/>
</dbReference>
<dbReference type="GO" id="GO:0005125">
    <property type="term" value="F:cytokine activity"/>
    <property type="evidence" value="ECO:0007669"/>
    <property type="project" value="Ensembl"/>
</dbReference>
<dbReference type="GO" id="GO:0031707">
    <property type="term" value="F:endothelin A receptor binding"/>
    <property type="evidence" value="ECO:0000318"/>
    <property type="project" value="GO_Central"/>
</dbReference>
<dbReference type="GO" id="GO:0031708">
    <property type="term" value="F:endothelin B receptor binding"/>
    <property type="evidence" value="ECO:0000318"/>
    <property type="project" value="GO_Central"/>
</dbReference>
<dbReference type="GO" id="GO:0005179">
    <property type="term" value="F:hormone activity"/>
    <property type="evidence" value="ECO:0000318"/>
    <property type="project" value="GO_Central"/>
</dbReference>
<dbReference type="GO" id="GO:0007193">
    <property type="term" value="P:adenylate cyclase-inhibiting G protein-coupled receptor signaling pathway"/>
    <property type="evidence" value="ECO:0007669"/>
    <property type="project" value="Ensembl"/>
</dbReference>
<dbReference type="GO" id="GO:0014824">
    <property type="term" value="P:artery smooth muscle contraction"/>
    <property type="evidence" value="ECO:0007669"/>
    <property type="project" value="Ensembl"/>
</dbReference>
<dbReference type="GO" id="GO:0048675">
    <property type="term" value="P:axon extension"/>
    <property type="evidence" value="ECO:0007669"/>
    <property type="project" value="Ensembl"/>
</dbReference>
<dbReference type="GO" id="GO:0060385">
    <property type="term" value="P:axonogenesis involved in innervation"/>
    <property type="evidence" value="ECO:0007669"/>
    <property type="project" value="Ensembl"/>
</dbReference>
<dbReference type="GO" id="GO:0007589">
    <property type="term" value="P:body fluid secretion"/>
    <property type="evidence" value="ECO:0007669"/>
    <property type="project" value="Ensembl"/>
</dbReference>
<dbReference type="GO" id="GO:0001569">
    <property type="term" value="P:branching involved in blood vessel morphogenesis"/>
    <property type="evidence" value="ECO:0007669"/>
    <property type="project" value="Ensembl"/>
</dbReference>
<dbReference type="GO" id="GO:0070588">
    <property type="term" value="P:calcium ion transmembrane transport"/>
    <property type="evidence" value="ECO:0007669"/>
    <property type="project" value="Ensembl"/>
</dbReference>
<dbReference type="GO" id="GO:0019722">
    <property type="term" value="P:calcium-mediated signaling"/>
    <property type="evidence" value="ECO:0007669"/>
    <property type="project" value="Ensembl"/>
</dbReference>
<dbReference type="GO" id="GO:0141156">
    <property type="term" value="P:cAMP/PKA signal transduction"/>
    <property type="evidence" value="ECO:0007669"/>
    <property type="project" value="Ensembl"/>
</dbReference>
<dbReference type="GO" id="GO:0060070">
    <property type="term" value="P:canonical Wnt signaling pathway"/>
    <property type="evidence" value="ECO:0007669"/>
    <property type="project" value="Ensembl"/>
</dbReference>
<dbReference type="GO" id="GO:0003253">
    <property type="term" value="P:cardiac neural crest cell migration involved in outflow tract morphogenesis"/>
    <property type="evidence" value="ECO:0007669"/>
    <property type="project" value="Ensembl"/>
</dbReference>
<dbReference type="GO" id="GO:0051216">
    <property type="term" value="P:cartilage development"/>
    <property type="evidence" value="ECO:0007669"/>
    <property type="project" value="Ensembl"/>
</dbReference>
<dbReference type="GO" id="GO:0071372">
    <property type="term" value="P:cellular response to follicle-stimulating hormone stimulus"/>
    <property type="evidence" value="ECO:0007669"/>
    <property type="project" value="Ensembl"/>
</dbReference>
<dbReference type="GO" id="GO:0044751">
    <property type="term" value="P:cellular response to human chorionic gonadotropin stimulus"/>
    <property type="evidence" value="ECO:0007669"/>
    <property type="project" value="Ensembl"/>
</dbReference>
<dbReference type="GO" id="GO:0070301">
    <property type="term" value="P:cellular response to hydrogen peroxide"/>
    <property type="evidence" value="ECO:0007669"/>
    <property type="project" value="Ensembl"/>
</dbReference>
<dbReference type="GO" id="GO:0071373">
    <property type="term" value="P:cellular response to luteinizing hormone stimulus"/>
    <property type="evidence" value="ECO:0007669"/>
    <property type="project" value="Ensembl"/>
</dbReference>
<dbReference type="GO" id="GO:0097237">
    <property type="term" value="P:cellular response to toxic substance"/>
    <property type="evidence" value="ECO:0007669"/>
    <property type="project" value="Ensembl"/>
</dbReference>
<dbReference type="GO" id="GO:0009953">
    <property type="term" value="P:dorsal/ventral pattern formation"/>
    <property type="evidence" value="ECO:0007669"/>
    <property type="project" value="Ensembl"/>
</dbReference>
<dbReference type="GO" id="GO:0035050">
    <property type="term" value="P:embryonic heart tube development"/>
    <property type="evidence" value="ECO:0007669"/>
    <property type="project" value="Ensembl"/>
</dbReference>
<dbReference type="GO" id="GO:0086100">
    <property type="term" value="P:endothelin receptor signaling pathway"/>
    <property type="evidence" value="ECO:0000250"/>
    <property type="project" value="UniProtKB"/>
</dbReference>
<dbReference type="GO" id="GO:0086101">
    <property type="term" value="P:endothelin receptor signaling pathway involved in heart process"/>
    <property type="evidence" value="ECO:0007669"/>
    <property type="project" value="Ensembl"/>
</dbReference>
<dbReference type="GO" id="GO:0070371">
    <property type="term" value="P:ERK1 and ERK2 cascade"/>
    <property type="evidence" value="ECO:0007669"/>
    <property type="project" value="Ensembl"/>
</dbReference>
<dbReference type="GO" id="GO:0072011">
    <property type="term" value="P:glomerular endothelium development"/>
    <property type="evidence" value="ECO:0007669"/>
    <property type="project" value="Ensembl"/>
</dbReference>
<dbReference type="GO" id="GO:0003094">
    <property type="term" value="P:glomerular filtration"/>
    <property type="evidence" value="ECO:0007669"/>
    <property type="project" value="Ensembl"/>
</dbReference>
<dbReference type="GO" id="GO:0001701">
    <property type="term" value="P:in utero embryonic development"/>
    <property type="evidence" value="ECO:0007669"/>
    <property type="project" value="Ensembl"/>
</dbReference>
<dbReference type="GO" id="GO:0006874">
    <property type="term" value="P:intracellular calcium ion homeostasis"/>
    <property type="evidence" value="ECO:0000318"/>
    <property type="project" value="GO_Central"/>
</dbReference>
<dbReference type="GO" id="GO:1903537">
    <property type="term" value="P:meiotic cell cycle process involved in oocyte maturation"/>
    <property type="evidence" value="ECO:0007669"/>
    <property type="project" value="Ensembl"/>
</dbReference>
<dbReference type="GO" id="GO:0042474">
    <property type="term" value="P:middle ear morphogenesis"/>
    <property type="evidence" value="ECO:0007669"/>
    <property type="project" value="Ensembl"/>
</dbReference>
<dbReference type="GO" id="GO:0007005">
    <property type="term" value="P:mitochondrion organization"/>
    <property type="evidence" value="ECO:0007669"/>
    <property type="project" value="Ensembl"/>
</dbReference>
<dbReference type="GO" id="GO:0010629">
    <property type="term" value="P:negative regulation of gene expression"/>
    <property type="evidence" value="ECO:0007669"/>
    <property type="project" value="Ensembl"/>
</dbReference>
<dbReference type="GO" id="GO:0160195">
    <property type="term" value="P:negative regulation of phospholipase C/protein kinase C signal transduction"/>
    <property type="evidence" value="ECO:0007669"/>
    <property type="project" value="Ensembl"/>
</dbReference>
<dbReference type="GO" id="GO:0051248">
    <property type="term" value="P:negative regulation of protein metabolic process"/>
    <property type="evidence" value="ECO:0007669"/>
    <property type="project" value="Ensembl"/>
</dbReference>
<dbReference type="GO" id="GO:0000122">
    <property type="term" value="P:negative regulation of transcription by RNA polymerase II"/>
    <property type="evidence" value="ECO:0007669"/>
    <property type="project" value="Ensembl"/>
</dbReference>
<dbReference type="GO" id="GO:0014034">
    <property type="term" value="P:neural crest cell fate commitment"/>
    <property type="evidence" value="ECO:0007669"/>
    <property type="project" value="Ensembl"/>
</dbReference>
<dbReference type="GO" id="GO:0030185">
    <property type="term" value="P:nitric oxide transport"/>
    <property type="evidence" value="ECO:0007669"/>
    <property type="project" value="Ensembl"/>
</dbReference>
<dbReference type="GO" id="GO:0003357">
    <property type="term" value="P:noradrenergic neuron differentiation"/>
    <property type="evidence" value="ECO:0007669"/>
    <property type="project" value="Ensembl"/>
</dbReference>
<dbReference type="GO" id="GO:0030072">
    <property type="term" value="P:peptide hormone secretion"/>
    <property type="evidence" value="ECO:0007669"/>
    <property type="project" value="Ensembl"/>
</dbReference>
<dbReference type="GO" id="GO:0061626">
    <property type="term" value="P:pharyngeal arch artery morphogenesis"/>
    <property type="evidence" value="ECO:0007669"/>
    <property type="project" value="Ensembl"/>
</dbReference>
<dbReference type="GO" id="GO:0043491">
    <property type="term" value="P:phosphatidylinositol 3-kinase/protein kinase B signal transduction"/>
    <property type="evidence" value="ECO:0007669"/>
    <property type="project" value="Ensembl"/>
</dbReference>
<dbReference type="GO" id="GO:0007200">
    <property type="term" value="P:phospholipase C-activating G protein-coupled receptor signaling pathway"/>
    <property type="evidence" value="ECO:0007669"/>
    <property type="project" value="Ensembl"/>
</dbReference>
<dbReference type="GO" id="GO:0031583">
    <property type="term" value="P:phospholipase D-activating G protein-coupled receptor signaling pathway"/>
    <property type="evidence" value="ECO:0007669"/>
    <property type="project" value="Ensembl"/>
</dbReference>
<dbReference type="GO" id="GO:0072112">
    <property type="term" value="P:podocyte differentiation"/>
    <property type="evidence" value="ECO:0007669"/>
    <property type="project" value="Ensembl"/>
</dbReference>
<dbReference type="GO" id="GO:1905653">
    <property type="term" value="P:positive regulation of artery morphogenesis"/>
    <property type="evidence" value="ECO:0007669"/>
    <property type="project" value="Ensembl"/>
</dbReference>
<dbReference type="GO" id="GO:0050850">
    <property type="term" value="P:positive regulation of calcium-mediated signaling"/>
    <property type="evidence" value="ECO:0007669"/>
    <property type="project" value="Ensembl"/>
</dbReference>
<dbReference type="GO" id="GO:0043123">
    <property type="term" value="P:positive regulation of canonical NF-kappaB signal transduction"/>
    <property type="evidence" value="ECO:0007669"/>
    <property type="project" value="Ensembl"/>
</dbReference>
<dbReference type="GO" id="GO:0061051">
    <property type="term" value="P:positive regulation of cell growth involved in cardiac muscle cell development"/>
    <property type="evidence" value="ECO:0007669"/>
    <property type="project" value="Ensembl"/>
</dbReference>
<dbReference type="GO" id="GO:0030335">
    <property type="term" value="P:positive regulation of cell migration"/>
    <property type="evidence" value="ECO:0007669"/>
    <property type="project" value="Ensembl"/>
</dbReference>
<dbReference type="GO" id="GO:0045793">
    <property type="term" value="P:positive regulation of cell size"/>
    <property type="evidence" value="ECO:0007669"/>
    <property type="project" value="Ensembl"/>
</dbReference>
<dbReference type="GO" id="GO:0070101">
    <property type="term" value="P:positive regulation of chemokine-mediated signaling pathway"/>
    <property type="evidence" value="ECO:0007669"/>
    <property type="project" value="Ensembl"/>
</dbReference>
<dbReference type="GO" id="GO:0010460">
    <property type="term" value="P:positive regulation of heart rate"/>
    <property type="evidence" value="ECO:0007669"/>
    <property type="project" value="Ensembl"/>
</dbReference>
<dbReference type="GO" id="GO:0046887">
    <property type="term" value="P:positive regulation of hormone secretion"/>
    <property type="evidence" value="ECO:0007669"/>
    <property type="project" value="Ensembl"/>
</dbReference>
<dbReference type="GO" id="GO:0046330">
    <property type="term" value="P:positive regulation of JNK cascade"/>
    <property type="evidence" value="ECO:0007669"/>
    <property type="project" value="Ensembl"/>
</dbReference>
<dbReference type="GO" id="GO:0045840">
    <property type="term" value="P:positive regulation of mitotic nuclear division"/>
    <property type="evidence" value="ECO:0007669"/>
    <property type="project" value="Ensembl"/>
</dbReference>
<dbReference type="GO" id="GO:1900182">
    <property type="term" value="P:positive regulation of protein localization to nucleus"/>
    <property type="evidence" value="ECO:0000250"/>
    <property type="project" value="UniProtKB"/>
</dbReference>
<dbReference type="GO" id="GO:0035815">
    <property type="term" value="P:positive regulation of renal sodium excretion"/>
    <property type="evidence" value="ECO:0007669"/>
    <property type="project" value="Ensembl"/>
</dbReference>
<dbReference type="GO" id="GO:0060298">
    <property type="term" value="P:positive regulation of sarcomere organization"/>
    <property type="evidence" value="ECO:0007669"/>
    <property type="project" value="Ensembl"/>
</dbReference>
<dbReference type="GO" id="GO:0048661">
    <property type="term" value="P:positive regulation of smooth muscle cell proliferation"/>
    <property type="evidence" value="ECO:0007669"/>
    <property type="project" value="Ensembl"/>
</dbReference>
<dbReference type="GO" id="GO:0045987">
    <property type="term" value="P:positive regulation of smooth muscle contraction"/>
    <property type="evidence" value="ECO:0000318"/>
    <property type="project" value="GO_Central"/>
</dbReference>
<dbReference type="GO" id="GO:0045944">
    <property type="term" value="P:positive regulation of transcription by RNA polymerase II"/>
    <property type="evidence" value="ECO:0007669"/>
    <property type="project" value="Ensembl"/>
</dbReference>
<dbReference type="GO" id="GO:0035810">
    <property type="term" value="P:positive regulation of urine volume"/>
    <property type="evidence" value="ECO:0007669"/>
    <property type="project" value="Ensembl"/>
</dbReference>
<dbReference type="GO" id="GO:0001516">
    <property type="term" value="P:prostaglandin biosynthetic process"/>
    <property type="evidence" value="ECO:0007669"/>
    <property type="project" value="Ensembl"/>
</dbReference>
<dbReference type="GO" id="GO:0008217">
    <property type="term" value="P:regulation of blood pressure"/>
    <property type="evidence" value="ECO:0000303"/>
    <property type="project" value="AgBase"/>
</dbReference>
<dbReference type="GO" id="GO:0010827">
    <property type="term" value="P:regulation of D-glucose transmembrane transport"/>
    <property type="evidence" value="ECO:0007669"/>
    <property type="project" value="Ensembl"/>
</dbReference>
<dbReference type="GO" id="GO:0006885">
    <property type="term" value="P:regulation of pH"/>
    <property type="evidence" value="ECO:0007669"/>
    <property type="project" value="Ensembl"/>
</dbReference>
<dbReference type="GO" id="GO:0003100">
    <property type="term" value="P:regulation of systemic arterial blood pressure by endothelin"/>
    <property type="evidence" value="ECO:0000318"/>
    <property type="project" value="GO_Central"/>
</dbReference>
<dbReference type="GO" id="GO:0019229">
    <property type="term" value="P:regulation of vasoconstriction"/>
    <property type="evidence" value="ECO:0000303"/>
    <property type="project" value="AgBase"/>
</dbReference>
<dbReference type="GO" id="GO:0070294">
    <property type="term" value="P:renal sodium ion absorption"/>
    <property type="evidence" value="ECO:0007669"/>
    <property type="project" value="Ensembl"/>
</dbReference>
<dbReference type="GO" id="GO:0007585">
    <property type="term" value="P:respiratory gaseous exchange by respiratory system"/>
    <property type="evidence" value="ECO:0007669"/>
    <property type="project" value="Ensembl"/>
</dbReference>
<dbReference type="GO" id="GO:0001975">
    <property type="term" value="P:response to amphetamine"/>
    <property type="evidence" value="ECO:0007669"/>
    <property type="project" value="Ensembl"/>
</dbReference>
<dbReference type="GO" id="GO:0001666">
    <property type="term" value="P:response to hypoxia"/>
    <property type="evidence" value="ECO:0007669"/>
    <property type="project" value="Ensembl"/>
</dbReference>
<dbReference type="GO" id="GO:0043179">
    <property type="term" value="P:rhythmic excitation"/>
    <property type="evidence" value="ECO:0007669"/>
    <property type="project" value="Ensembl"/>
</dbReference>
<dbReference type="GO" id="GO:1902287">
    <property type="term" value="P:semaphorin-plexin signaling pathway involved in axon guidance"/>
    <property type="evidence" value="ECO:0007669"/>
    <property type="project" value="Ensembl"/>
</dbReference>
<dbReference type="GO" id="GO:0023019">
    <property type="term" value="P:signal transduction involved in regulation of gene expression"/>
    <property type="evidence" value="ECO:0007669"/>
    <property type="project" value="Ensembl"/>
</dbReference>
<dbReference type="GO" id="GO:0097492">
    <property type="term" value="P:sympathetic neuron axon guidance"/>
    <property type="evidence" value="ECO:0007669"/>
    <property type="project" value="Ensembl"/>
</dbReference>
<dbReference type="GO" id="GO:0030878">
    <property type="term" value="P:thyroid gland development"/>
    <property type="evidence" value="ECO:0007669"/>
    <property type="project" value="Ensembl"/>
</dbReference>
<dbReference type="GO" id="GO:0006366">
    <property type="term" value="P:transcription by RNA polymerase II"/>
    <property type="evidence" value="ECO:0007669"/>
    <property type="project" value="Ensembl"/>
</dbReference>
<dbReference type="GO" id="GO:0014826">
    <property type="term" value="P:vein smooth muscle contraction"/>
    <property type="evidence" value="ECO:0000318"/>
    <property type="project" value="GO_Central"/>
</dbReference>
<dbReference type="InterPro" id="IPR020475">
    <property type="entry name" value="Endothelin"/>
</dbReference>
<dbReference type="InterPro" id="IPR019764">
    <property type="entry name" value="Endothelin_toxin_CS"/>
</dbReference>
<dbReference type="InterPro" id="IPR001928">
    <property type="entry name" value="Endothln-like_toxin"/>
</dbReference>
<dbReference type="PANTHER" id="PTHR13874">
    <property type="entry name" value="ENDOTHELIN"/>
    <property type="match status" value="1"/>
</dbReference>
<dbReference type="PANTHER" id="PTHR13874:SF10">
    <property type="entry name" value="ENDOTHELIN-1"/>
    <property type="match status" value="1"/>
</dbReference>
<dbReference type="Pfam" id="PF00322">
    <property type="entry name" value="Endothelin"/>
    <property type="match status" value="1"/>
</dbReference>
<dbReference type="PRINTS" id="PR00365">
    <property type="entry name" value="ENDOTHELIN"/>
</dbReference>
<dbReference type="SMART" id="SM00272">
    <property type="entry name" value="END"/>
    <property type="match status" value="2"/>
</dbReference>
<dbReference type="PROSITE" id="PS00270">
    <property type="entry name" value="ENDOTHELIN"/>
    <property type="match status" value="2"/>
</dbReference>
<proteinExistence type="evidence at transcript level"/>
<feature type="signal peptide" evidence="5">
    <location>
        <begin position="1"/>
        <end position="25"/>
    </location>
</feature>
<feature type="propeptide" id="PRO_0000008046" evidence="4">
    <location>
        <begin position="26"/>
        <end position="50"/>
    </location>
</feature>
<feature type="peptide" id="PRO_0000436393" description="Big endothelin-1" evidence="4">
    <location>
        <begin position="53"/>
        <end position="91"/>
    </location>
</feature>
<feature type="peptide" id="PRO_0000008047" description="Endothelin-1">
    <location>
        <begin position="53"/>
        <end position="73"/>
    </location>
</feature>
<feature type="propeptide" id="PRO_0000008048">
    <location>
        <begin position="74"/>
        <end position="202"/>
    </location>
</feature>
<feature type="region of interest" description="Endothelin-like">
    <location>
        <begin position="110"/>
        <end position="124"/>
    </location>
</feature>
<feature type="site" description="Cleavage; by KEL" evidence="1">
    <location>
        <begin position="73"/>
        <end position="74"/>
    </location>
</feature>
<feature type="disulfide bond" evidence="1">
    <location>
        <begin position="53"/>
        <end position="67"/>
    </location>
</feature>
<feature type="disulfide bond" evidence="1">
    <location>
        <begin position="55"/>
        <end position="63"/>
    </location>
</feature>
<feature type="sequence conflict" description="In Ref. 2; CAA37117." evidence="6" ref="2">
    <original>D</original>
    <variation>A</variation>
    <location>
        <position position="132"/>
    </location>
</feature>
<protein>
    <recommendedName>
        <fullName>Endothelin-1</fullName>
        <shortName>ET-1</shortName>
    </recommendedName>
    <alternativeName>
        <fullName>Preproendothelin-1</fullName>
        <shortName>PPET1</shortName>
    </alternativeName>
    <component>
        <recommendedName>
            <fullName>Big endothelin-1</fullName>
        </recommendedName>
    </component>
</protein>
<gene>
    <name type="primary">EDN1</name>
</gene>
<keyword id="KW-0165">Cleavage on pair of basic residues</keyword>
<keyword id="KW-1015">Disulfide bond</keyword>
<keyword id="KW-1185">Reference proteome</keyword>
<keyword id="KW-0964">Secreted</keyword>
<keyword id="KW-0732">Signal</keyword>
<keyword id="KW-0838">Vasoactive</keyword>
<keyword id="KW-0839">Vasoconstrictor</keyword>
<accession>P17322</accession>
<accession>Q3T0C1</accession>
<evidence type="ECO:0000250" key="1">
    <source>
        <dbReference type="UniProtKB" id="P05305"/>
    </source>
</evidence>
<evidence type="ECO:0000250" key="2">
    <source>
        <dbReference type="UniProtKB" id="P09558"/>
    </source>
</evidence>
<evidence type="ECO:0000250" key="3">
    <source>
        <dbReference type="UniProtKB" id="P22387"/>
    </source>
</evidence>
<evidence type="ECO:0000250" key="4">
    <source>
        <dbReference type="UniProtKB" id="P22388"/>
    </source>
</evidence>
<evidence type="ECO:0000255" key="5"/>
<evidence type="ECO:0000305" key="6"/>
<reference key="1">
    <citation type="journal article" date="1990" name="Nucleic Acids Res.">
        <title>Cloning and sequencing of a bovine preproendothelin cDNA.</title>
        <authorList>
            <person name="Price G.J."/>
            <person name="Malone L."/>
        </authorList>
    </citation>
    <scope>NUCLEOTIDE SEQUENCE [MRNA]</scope>
    <source>
        <tissue>Aorta</tissue>
    </source>
</reference>
<reference key="2">
    <citation type="journal article" date="1990" name="Nucleic Acids Res.">
        <title>Nucleotide sequence of endothelin cDNA from bovine endothelial cells.</title>
        <authorList>
            <person name="Elshourbagy N.A."/>
            <person name="Kmetz P."/>
            <person name="Sathe G.M."/>
        </authorList>
    </citation>
    <scope>NUCLEOTIDE SEQUENCE [MRNA]</scope>
    <source>
        <tissue>Pulmonary artery</tissue>
    </source>
</reference>
<reference key="3">
    <citation type="journal article" date="1992" name="Hypertension">
        <title>Induction of endothelin-1 gene by angiotensin and vasopressin in endothelial cells.</title>
        <authorList>
            <person name="Imai T."/>
            <person name="Hirata Y."/>
            <person name="Emori T."/>
            <person name="Yanagisawa M."/>
            <person name="Masaki T."/>
            <person name="Marumo F."/>
        </authorList>
    </citation>
    <scope>NUCLEOTIDE SEQUENCE [MRNA]</scope>
    <source>
        <tissue>Carotid artery</tissue>
    </source>
</reference>
<reference key="4">
    <citation type="submission" date="2005-08" db="EMBL/GenBank/DDBJ databases">
        <authorList>
            <consortium name="NIH - Mammalian Gene Collection (MGC) project"/>
        </authorList>
    </citation>
    <scope>NUCLEOTIDE SEQUENCE [LARGE SCALE MRNA]</scope>
    <source>
        <strain>Crossbred X Angus</strain>
        <tissue>Ileum</tissue>
    </source>
</reference>
<organism>
    <name type="scientific">Bos taurus</name>
    <name type="common">Bovine</name>
    <dbReference type="NCBI Taxonomy" id="9913"/>
    <lineage>
        <taxon>Eukaryota</taxon>
        <taxon>Metazoa</taxon>
        <taxon>Chordata</taxon>
        <taxon>Craniata</taxon>
        <taxon>Vertebrata</taxon>
        <taxon>Euteleostomi</taxon>
        <taxon>Mammalia</taxon>
        <taxon>Eutheria</taxon>
        <taxon>Laurasiatheria</taxon>
        <taxon>Artiodactyla</taxon>
        <taxon>Ruminantia</taxon>
        <taxon>Pecora</taxon>
        <taxon>Bovidae</taxon>
        <taxon>Bovinae</taxon>
        <taxon>Bos</taxon>
    </lineage>
</organism>
<sequence length="202" mass="22977">MDYFPMIFALLFVAFQGAPEAAVLGTELSAGAEDGGEKPAPATPWRPRRSKRCSCSSLMDKECVYFCHLDIIWVNTPEHVVPYGLGSPSRSKRSLKDFFPTKATVHRKRCQCASQTDKKCWNFCQAGKELRDQDSMEKAWNNQKRGKDCSKLGEKCLHQQLVAGRKTRRLEAISNSIKTSFRVAKLKAQLYRDKKVIYNRAH</sequence>